<dbReference type="EMBL" id="CP000087">
    <property type="protein sequence ID" value="ABE05248.1"/>
    <property type="molecule type" value="Genomic_DNA"/>
</dbReference>
<dbReference type="RefSeq" id="WP_011477826.1">
    <property type="nucleotide sequence ID" value="NC_007940.1"/>
</dbReference>
<dbReference type="SMR" id="Q1RHB6"/>
<dbReference type="KEGG" id="rbe:RBE_1167"/>
<dbReference type="eggNOG" id="COG2142">
    <property type="taxonomic scope" value="Bacteria"/>
</dbReference>
<dbReference type="HOGENOM" id="CLU_151315_0_2_5"/>
<dbReference type="OrthoDB" id="9809280at2"/>
<dbReference type="UniPathway" id="UPA00223"/>
<dbReference type="Proteomes" id="UP000001951">
    <property type="component" value="Chromosome"/>
</dbReference>
<dbReference type="GO" id="GO:0005886">
    <property type="term" value="C:plasma membrane"/>
    <property type="evidence" value="ECO:0007669"/>
    <property type="project" value="UniProtKB-SubCell"/>
</dbReference>
<dbReference type="GO" id="GO:0009055">
    <property type="term" value="F:electron transfer activity"/>
    <property type="evidence" value="ECO:0007669"/>
    <property type="project" value="TreeGrafter"/>
</dbReference>
<dbReference type="GO" id="GO:0020037">
    <property type="term" value="F:heme binding"/>
    <property type="evidence" value="ECO:0007669"/>
    <property type="project" value="InterPro"/>
</dbReference>
<dbReference type="GO" id="GO:0046872">
    <property type="term" value="F:metal ion binding"/>
    <property type="evidence" value="ECO:0007669"/>
    <property type="project" value="UniProtKB-KW"/>
</dbReference>
<dbReference type="GO" id="GO:0017004">
    <property type="term" value="P:cytochrome complex assembly"/>
    <property type="evidence" value="ECO:0007669"/>
    <property type="project" value="TreeGrafter"/>
</dbReference>
<dbReference type="GO" id="GO:0006099">
    <property type="term" value="P:tricarboxylic acid cycle"/>
    <property type="evidence" value="ECO:0007669"/>
    <property type="project" value="UniProtKB-UniPathway"/>
</dbReference>
<dbReference type="CDD" id="cd03495">
    <property type="entry name" value="SQR_TypeC_SdhD_like"/>
    <property type="match status" value="1"/>
</dbReference>
<dbReference type="Gene3D" id="1.20.1300.10">
    <property type="entry name" value="Fumarate reductase/succinate dehydrogenase, transmembrane subunit"/>
    <property type="match status" value="1"/>
</dbReference>
<dbReference type="InterPro" id="IPR034804">
    <property type="entry name" value="SQR/QFR_C/D"/>
</dbReference>
<dbReference type="InterPro" id="IPR014312">
    <property type="entry name" value="Succ_DH_anchor"/>
</dbReference>
<dbReference type="InterPro" id="IPR000701">
    <property type="entry name" value="SuccDH_FuR_B_TM-su"/>
</dbReference>
<dbReference type="NCBIfam" id="TIGR02968">
    <property type="entry name" value="succ_dehyd_anc"/>
    <property type="match status" value="1"/>
</dbReference>
<dbReference type="PANTHER" id="PTHR38689">
    <property type="entry name" value="SUCCINATE DEHYDROGENASE HYDROPHOBIC MEMBRANE ANCHOR SUBUNIT"/>
    <property type="match status" value="1"/>
</dbReference>
<dbReference type="PANTHER" id="PTHR38689:SF1">
    <property type="entry name" value="SUCCINATE DEHYDROGENASE HYDROPHOBIC MEMBRANE ANCHOR SUBUNIT"/>
    <property type="match status" value="1"/>
</dbReference>
<dbReference type="Pfam" id="PF01127">
    <property type="entry name" value="Sdh_cyt"/>
    <property type="match status" value="1"/>
</dbReference>
<dbReference type="SUPFAM" id="SSF81343">
    <property type="entry name" value="Fumarate reductase respiratory complex transmembrane subunits"/>
    <property type="match status" value="1"/>
</dbReference>
<feature type="chain" id="PRO_0000280979" description="Succinate dehydrogenase hydrophobic membrane anchor subunit">
    <location>
        <begin position="1"/>
        <end position="125"/>
    </location>
</feature>
<feature type="topological domain" description="Cytoplasmic" evidence="1">
    <location>
        <begin position="1"/>
        <end position="24"/>
    </location>
</feature>
<feature type="transmembrane region" description="Helical" evidence="1">
    <location>
        <begin position="25"/>
        <end position="45"/>
    </location>
</feature>
<feature type="topological domain" description="Periplasmic" evidence="1">
    <location>
        <begin position="46"/>
        <end position="67"/>
    </location>
</feature>
<feature type="transmembrane region" description="Helical" evidence="1">
    <location>
        <begin position="68"/>
        <end position="89"/>
    </location>
</feature>
<feature type="topological domain" description="Cytoplasmic" evidence="1">
    <location>
        <begin position="90"/>
        <end position="99"/>
    </location>
</feature>
<feature type="transmembrane region" description="Helical" evidence="1">
    <location>
        <begin position="100"/>
        <end position="123"/>
    </location>
</feature>
<feature type="binding site" description="axial binding residue" evidence="1">
    <location>
        <position position="80"/>
    </location>
    <ligand>
        <name>heme</name>
        <dbReference type="ChEBI" id="CHEBI:30413"/>
        <note>ligand shared with second transmembrane subunit</note>
    </ligand>
    <ligandPart>
        <name>Fe</name>
        <dbReference type="ChEBI" id="CHEBI:18248"/>
    </ligandPart>
</feature>
<feature type="binding site" evidence="1">
    <location>
        <position position="92"/>
    </location>
    <ligand>
        <name>a ubiquinone</name>
        <dbReference type="ChEBI" id="CHEBI:16389"/>
    </ligand>
</feature>
<name>DHSD_RICBR</name>
<gene>
    <name type="primary">sdhD</name>
    <name type="ordered locus">RBE_1167</name>
</gene>
<evidence type="ECO:0000250" key="1"/>
<proteinExistence type="inferred from homology"/>
<keyword id="KW-0997">Cell inner membrane</keyword>
<keyword id="KW-1003">Cell membrane</keyword>
<keyword id="KW-0249">Electron transport</keyword>
<keyword id="KW-0349">Heme</keyword>
<keyword id="KW-0408">Iron</keyword>
<keyword id="KW-0472">Membrane</keyword>
<keyword id="KW-0479">Metal-binding</keyword>
<keyword id="KW-0812">Transmembrane</keyword>
<keyword id="KW-1133">Transmembrane helix</keyword>
<keyword id="KW-0813">Transport</keyword>
<keyword id="KW-0816">Tricarboxylic acid cycle</keyword>
<accession>Q1RHB6</accession>
<protein>
    <recommendedName>
        <fullName>Succinate dehydrogenase hydrophobic membrane anchor subunit</fullName>
    </recommendedName>
</protein>
<organism>
    <name type="scientific">Rickettsia bellii (strain RML369-C)</name>
    <dbReference type="NCBI Taxonomy" id="336407"/>
    <lineage>
        <taxon>Bacteria</taxon>
        <taxon>Pseudomonadati</taxon>
        <taxon>Pseudomonadota</taxon>
        <taxon>Alphaproteobacteria</taxon>
        <taxon>Rickettsiales</taxon>
        <taxon>Rickettsiaceae</taxon>
        <taxon>Rickettsieae</taxon>
        <taxon>Rickettsia</taxon>
        <taxon>belli group</taxon>
    </lineage>
</organism>
<comment type="function">
    <text evidence="1">Membrane-anchoring subunit of succinate dehydrogenase (SDH).</text>
</comment>
<comment type="cofactor">
    <cofactor evidence="1">
        <name>heme</name>
        <dbReference type="ChEBI" id="CHEBI:30413"/>
    </cofactor>
    <text evidence="1">The heme is bound between the two transmembrane subunits.</text>
</comment>
<comment type="pathway">
    <text>Carbohydrate metabolism; tricarboxylic acid cycle.</text>
</comment>
<comment type="subunit">
    <text evidence="1">Part of an enzyme complex containing four subunits: a flavoprotein, an iron-sulfur protein, plus two membrane-anchoring proteins, SdhC and SdhD.</text>
</comment>
<comment type="subcellular location">
    <subcellularLocation>
        <location>Cell inner membrane</location>
        <topology>Multi-pass membrane protein</topology>
    </subcellularLocation>
</comment>
<reference key="1">
    <citation type="journal article" date="2006" name="PLoS Genet.">
        <title>Genome sequence of Rickettsia bellii illuminates the role of amoebae in gene exchanges between intracellular pathogens.</title>
        <authorList>
            <person name="Ogata H."/>
            <person name="La Scola B."/>
            <person name="Audic S."/>
            <person name="Renesto P."/>
            <person name="Blanc G."/>
            <person name="Robert C."/>
            <person name="Fournier P.-E."/>
            <person name="Claverie J.-M."/>
            <person name="Raoult D."/>
        </authorList>
    </citation>
    <scope>NUCLEOTIDE SEQUENCE [LARGE SCALE GENOMIC DNA]</scope>
    <source>
        <strain>RML369-C</strain>
    </source>
</reference>
<sequence length="125" mass="14208">MTYDFRAEIVKAKNTGSAKSGSHHWLLQRITAIILVLCSLWLLYFTLANKNSDVNIIIWELKRPINLIPLLIAVITSLYHAMLGMQVVIEDYISCNKLRNTLIIAVKLFSILTIVAFIVAVFYRG</sequence>